<comment type="function">
    <text evidence="1">Methylates ribosomal protein L11.</text>
</comment>
<comment type="catalytic activity">
    <reaction evidence="1">
        <text>L-lysyl-[protein] + 3 S-adenosyl-L-methionine = N(6),N(6),N(6)-trimethyl-L-lysyl-[protein] + 3 S-adenosyl-L-homocysteine + 3 H(+)</text>
        <dbReference type="Rhea" id="RHEA:54192"/>
        <dbReference type="Rhea" id="RHEA-COMP:9752"/>
        <dbReference type="Rhea" id="RHEA-COMP:13826"/>
        <dbReference type="ChEBI" id="CHEBI:15378"/>
        <dbReference type="ChEBI" id="CHEBI:29969"/>
        <dbReference type="ChEBI" id="CHEBI:57856"/>
        <dbReference type="ChEBI" id="CHEBI:59789"/>
        <dbReference type="ChEBI" id="CHEBI:61961"/>
    </reaction>
</comment>
<comment type="subcellular location">
    <subcellularLocation>
        <location evidence="1">Cytoplasm</location>
    </subcellularLocation>
</comment>
<comment type="similarity">
    <text evidence="1">Belongs to the methyltransferase superfamily. PrmA family.</text>
</comment>
<dbReference type="EC" id="2.1.1.-" evidence="1"/>
<dbReference type="EMBL" id="CP000513">
    <property type="protein sequence ID" value="ABQ14174.1"/>
    <property type="molecule type" value="Genomic_DNA"/>
</dbReference>
<dbReference type="RefSeq" id="WP_012030760.1">
    <property type="nucleotide sequence ID" value="NC_009446.1"/>
</dbReference>
<dbReference type="SMR" id="A5EVX5"/>
<dbReference type="STRING" id="246195.DNO_0422"/>
<dbReference type="KEGG" id="dno:DNO_0422"/>
<dbReference type="eggNOG" id="COG2264">
    <property type="taxonomic scope" value="Bacteria"/>
</dbReference>
<dbReference type="HOGENOM" id="CLU_049382_4_1_6"/>
<dbReference type="OrthoDB" id="9785995at2"/>
<dbReference type="Proteomes" id="UP000000248">
    <property type="component" value="Chromosome"/>
</dbReference>
<dbReference type="GO" id="GO:0005737">
    <property type="term" value="C:cytoplasm"/>
    <property type="evidence" value="ECO:0007669"/>
    <property type="project" value="UniProtKB-SubCell"/>
</dbReference>
<dbReference type="GO" id="GO:0016279">
    <property type="term" value="F:protein-lysine N-methyltransferase activity"/>
    <property type="evidence" value="ECO:0007669"/>
    <property type="project" value="RHEA"/>
</dbReference>
<dbReference type="GO" id="GO:0032259">
    <property type="term" value="P:methylation"/>
    <property type="evidence" value="ECO:0007669"/>
    <property type="project" value="UniProtKB-KW"/>
</dbReference>
<dbReference type="CDD" id="cd02440">
    <property type="entry name" value="AdoMet_MTases"/>
    <property type="match status" value="1"/>
</dbReference>
<dbReference type="Gene3D" id="3.40.50.150">
    <property type="entry name" value="Vaccinia Virus protein VP39"/>
    <property type="match status" value="1"/>
</dbReference>
<dbReference type="HAMAP" id="MF_00735">
    <property type="entry name" value="Methyltr_PrmA"/>
    <property type="match status" value="1"/>
</dbReference>
<dbReference type="InterPro" id="IPR050078">
    <property type="entry name" value="Ribosomal_L11_MeTrfase_PrmA"/>
</dbReference>
<dbReference type="InterPro" id="IPR004498">
    <property type="entry name" value="Ribosomal_PrmA_MeTrfase"/>
</dbReference>
<dbReference type="InterPro" id="IPR029063">
    <property type="entry name" value="SAM-dependent_MTases_sf"/>
</dbReference>
<dbReference type="NCBIfam" id="TIGR00406">
    <property type="entry name" value="prmA"/>
    <property type="match status" value="1"/>
</dbReference>
<dbReference type="PANTHER" id="PTHR43648">
    <property type="entry name" value="ELECTRON TRANSFER FLAVOPROTEIN BETA SUBUNIT LYSINE METHYLTRANSFERASE"/>
    <property type="match status" value="1"/>
</dbReference>
<dbReference type="PANTHER" id="PTHR43648:SF1">
    <property type="entry name" value="ELECTRON TRANSFER FLAVOPROTEIN BETA SUBUNIT LYSINE METHYLTRANSFERASE"/>
    <property type="match status" value="1"/>
</dbReference>
<dbReference type="Pfam" id="PF06325">
    <property type="entry name" value="PrmA"/>
    <property type="match status" value="1"/>
</dbReference>
<dbReference type="PIRSF" id="PIRSF000401">
    <property type="entry name" value="RPL11_MTase"/>
    <property type="match status" value="1"/>
</dbReference>
<dbReference type="SUPFAM" id="SSF53335">
    <property type="entry name" value="S-adenosyl-L-methionine-dependent methyltransferases"/>
    <property type="match status" value="1"/>
</dbReference>
<keyword id="KW-0963">Cytoplasm</keyword>
<keyword id="KW-0489">Methyltransferase</keyword>
<keyword id="KW-1185">Reference proteome</keyword>
<keyword id="KW-0949">S-adenosyl-L-methionine</keyword>
<keyword id="KW-0808">Transferase</keyword>
<proteinExistence type="inferred from homology"/>
<evidence type="ECO:0000255" key="1">
    <source>
        <dbReference type="HAMAP-Rule" id="MF_00735"/>
    </source>
</evidence>
<reference key="1">
    <citation type="journal article" date="2007" name="Nat. Biotechnol.">
        <title>Genome sequence and identification of candidate vaccine antigens from the animal pathogen Dichelobacter nodosus.</title>
        <authorList>
            <person name="Myers G.S.A."/>
            <person name="Parker D."/>
            <person name="Al-Hasani K."/>
            <person name="Kennan R.M."/>
            <person name="Seemann T."/>
            <person name="Ren Q."/>
            <person name="Badger J.H."/>
            <person name="Selengut J.D."/>
            <person name="Deboy R.T."/>
            <person name="Tettelin H."/>
            <person name="Boyce J.D."/>
            <person name="McCarl V.P."/>
            <person name="Han X."/>
            <person name="Nelson W.C."/>
            <person name="Madupu R."/>
            <person name="Mohamoud Y."/>
            <person name="Holley T."/>
            <person name="Fedorova N."/>
            <person name="Khouri H."/>
            <person name="Bottomley S.P."/>
            <person name="Whittington R.J."/>
            <person name="Adler B."/>
            <person name="Songer J.G."/>
            <person name="Rood J.I."/>
            <person name="Paulsen I.T."/>
        </authorList>
    </citation>
    <scope>NUCLEOTIDE SEQUENCE [LARGE SCALE GENOMIC DNA]</scope>
    <source>
        <strain>VCS1703A</strain>
    </source>
</reference>
<accession>A5EVX5</accession>
<organism>
    <name type="scientific">Dichelobacter nodosus (strain VCS1703A)</name>
    <dbReference type="NCBI Taxonomy" id="246195"/>
    <lineage>
        <taxon>Bacteria</taxon>
        <taxon>Pseudomonadati</taxon>
        <taxon>Pseudomonadota</taxon>
        <taxon>Gammaproteobacteria</taxon>
        <taxon>Cardiobacteriales</taxon>
        <taxon>Cardiobacteriaceae</taxon>
        <taxon>Dichelobacter</taxon>
    </lineage>
</organism>
<name>PRMA_DICNV</name>
<gene>
    <name evidence="1" type="primary">prmA</name>
    <name type="ordered locus">DNO_0422</name>
</gene>
<sequence>MTQRHWLELTLIADNDDDVLLLETALECAGAVAVTYQAANEEEIFEPEIGTTPMWSKTGVTGLFPLDTDPNAVIELLMQALGEDYPIAQHLLPESDWTRAWLEHFQPIAFGNHFWVAASEHVIEEHDAKVLRLDPGLAFGTGTHPSTAMCLHYLVNHAALHGKTVYDYGCGSGILGIAAAMMGAKAVYQTDIDPQALTASYENAQKNQVAEKIFLCEQPDLAPAVDLLVANILLEPLCALRAQFEKHLHAQSVMIFSGLLERQQQKLEQAYQDHYRIERINCRAGWILLRLTSL</sequence>
<feature type="chain" id="PRO_1000046020" description="Ribosomal protein L11 methyltransferase">
    <location>
        <begin position="1"/>
        <end position="294"/>
    </location>
</feature>
<feature type="binding site" evidence="1">
    <location>
        <position position="147"/>
    </location>
    <ligand>
        <name>S-adenosyl-L-methionine</name>
        <dbReference type="ChEBI" id="CHEBI:59789"/>
    </ligand>
</feature>
<feature type="binding site" evidence="1">
    <location>
        <position position="169"/>
    </location>
    <ligand>
        <name>S-adenosyl-L-methionine</name>
        <dbReference type="ChEBI" id="CHEBI:59789"/>
    </ligand>
</feature>
<feature type="binding site" evidence="1">
    <location>
        <position position="191"/>
    </location>
    <ligand>
        <name>S-adenosyl-L-methionine</name>
        <dbReference type="ChEBI" id="CHEBI:59789"/>
    </ligand>
</feature>
<feature type="binding site" evidence="1">
    <location>
        <position position="231"/>
    </location>
    <ligand>
        <name>S-adenosyl-L-methionine</name>
        <dbReference type="ChEBI" id="CHEBI:59789"/>
    </ligand>
</feature>
<protein>
    <recommendedName>
        <fullName evidence="1">Ribosomal protein L11 methyltransferase</fullName>
        <shortName evidence="1">L11 Mtase</shortName>
        <ecNumber evidence="1">2.1.1.-</ecNumber>
    </recommendedName>
</protein>